<sequence length="275" mass="30256">MTSEPSTSSEAGSSSLLDADKTNLLQEALVRAGVIRSQRQGISPTATNIKSPKKSALFEKIASHPLMPIVELLLEKCETAATTFDRKAFETDDIKRLFQSLEQRGVQLSSNRDEVDELMETAILALRTCMVELERVYSLMESFKAKYLATLRRTVCHEALVGNNGDSDDELSDNPLMPVLEMSEAAFQAQNKAMESALATLQSVSGSLSLPLQFTHQSITAAQIERNLEFLKQCGFPTQLPPNFLKPSNEKSPEKSEEEKSQKPSSSPKSPSLSD</sequence>
<keyword id="KW-0025">Alternative splicing</keyword>
<keyword id="KW-0539">Nucleus</keyword>
<keyword id="KW-1185">Reference proteome</keyword>
<keyword id="KW-0804">Transcription</keyword>
<keyword id="KW-0805">Transcription regulation</keyword>
<reference evidence="6" key="1">
    <citation type="journal article" date="2006" name="Dev. Cell">
        <title>Wnt signaling and a Hox protein cooperatively regulate psa-3/Meis to determine daughter cell fate after asymmetric cell division in C. elegans.</title>
        <authorList>
            <person name="Arata Y."/>
            <person name="Kouike H."/>
            <person name="Zhang Y."/>
            <person name="Herman M.A."/>
            <person name="Okano H."/>
            <person name="Sawa H."/>
        </authorList>
    </citation>
    <scope>NUCLEOTIDE SEQUENCE (ISOFORM B)</scope>
    <scope>FUNCTION</scope>
    <scope>INTERACTION WITH CEH-20</scope>
    <scope>SUBCELLULAR LOCATION</scope>
    <scope>DEVELOPMENTAL STAGE</scope>
    <scope>DISRUPTION PHENOTYPE</scope>
</reference>
<reference evidence="7" key="2">
    <citation type="journal article" date="1998" name="Science">
        <title>Genome sequence of the nematode C. elegans: a platform for investigating biology.</title>
        <authorList>
            <consortium name="The C. elegans sequencing consortium"/>
        </authorList>
    </citation>
    <scope>NUCLEOTIDE SEQUENCE [LARGE SCALE GENOMIC DNA]</scope>
    <source>
        <strain evidence="7">Bristol N2</strain>
    </source>
</reference>
<name>PSAP3_CAEEL</name>
<gene>
    <name evidence="8" type="primary">psa-3</name>
    <name evidence="8" type="ORF">F39D8.2</name>
</gene>
<dbReference type="EMBL" id="DQ118141">
    <property type="protein sequence ID" value="AAZ23152.1"/>
    <property type="molecule type" value="mRNA"/>
</dbReference>
<dbReference type="EMBL" id="BX284606">
    <property type="protein sequence ID" value="CAA93659.2"/>
    <property type="molecule type" value="Genomic_DNA"/>
</dbReference>
<dbReference type="EMBL" id="BX284606">
    <property type="protein sequence ID" value="CAL36513.2"/>
    <property type="molecule type" value="Genomic_DNA"/>
</dbReference>
<dbReference type="EMBL" id="BX284606">
    <property type="protein sequence ID" value="CAL36514.1"/>
    <property type="molecule type" value="Genomic_DNA"/>
</dbReference>
<dbReference type="EMBL" id="BX284606">
    <property type="protein sequence ID" value="CTQ87058.1"/>
    <property type="molecule type" value="Genomic_DNA"/>
</dbReference>
<dbReference type="RefSeq" id="NP_001076765.2">
    <molecule id="Q0G825-1"/>
    <property type="nucleotide sequence ID" value="NM_001083296.5"/>
</dbReference>
<dbReference type="RefSeq" id="NP_001076766.1">
    <molecule id="Q0G825-2"/>
    <property type="nucleotide sequence ID" value="NM_001083297.5"/>
</dbReference>
<dbReference type="RefSeq" id="NP_001257263.1">
    <molecule id="Q0G825-3"/>
    <property type="nucleotide sequence ID" value="NM_001270334.3"/>
</dbReference>
<dbReference type="RefSeq" id="NP_001300347.1">
    <molecule id="Q0G825-4"/>
    <property type="nucleotide sequence ID" value="NM_001313418.3"/>
</dbReference>
<dbReference type="SMR" id="Q0G825"/>
<dbReference type="FunCoup" id="Q0G825">
    <property type="interactions" value="1146"/>
</dbReference>
<dbReference type="STRING" id="6239.F39D8.2a.1"/>
<dbReference type="PaxDb" id="6239-F39D8.2a"/>
<dbReference type="EnsemblMetazoa" id="F39D8.2a.1">
    <molecule id="Q0G825-1"/>
    <property type="protein sequence ID" value="F39D8.2a.1"/>
    <property type="gene ID" value="WBGene00009560"/>
</dbReference>
<dbReference type="EnsemblMetazoa" id="F39D8.2b.1">
    <molecule id="Q0G825-2"/>
    <property type="protein sequence ID" value="F39D8.2b.1"/>
    <property type="gene ID" value="WBGene00009560"/>
</dbReference>
<dbReference type="EnsemblMetazoa" id="F39D8.2c.1">
    <molecule id="Q0G825-3"/>
    <property type="protein sequence ID" value="F39D8.2c.1"/>
    <property type="gene ID" value="WBGene00009560"/>
</dbReference>
<dbReference type="EnsemblMetazoa" id="F39D8.2d.1">
    <molecule id="Q0G825-4"/>
    <property type="protein sequence ID" value="F39D8.2d.1"/>
    <property type="gene ID" value="WBGene00009560"/>
</dbReference>
<dbReference type="GeneID" id="181631"/>
<dbReference type="KEGG" id="cel:CELE_F39D8.2"/>
<dbReference type="UCSC" id="F39D8.2a">
    <molecule id="Q0G825-1"/>
    <property type="organism name" value="c. elegans"/>
</dbReference>
<dbReference type="AGR" id="WB:WBGene00009560"/>
<dbReference type="CTD" id="181631"/>
<dbReference type="WormBase" id="F39D8.2a">
    <molecule id="Q0G825-1"/>
    <property type="protein sequence ID" value="CE50352"/>
    <property type="gene ID" value="WBGene00009560"/>
    <property type="gene designation" value="psa-3"/>
</dbReference>
<dbReference type="WormBase" id="F39D8.2b">
    <molecule id="Q0G825-2"/>
    <property type="protein sequence ID" value="CE40387"/>
    <property type="gene ID" value="WBGene00009560"/>
    <property type="gene designation" value="psa-3"/>
</dbReference>
<dbReference type="WormBase" id="F39D8.2c">
    <molecule id="Q0G825-3"/>
    <property type="protein sequence ID" value="CE34185"/>
    <property type="gene ID" value="WBGene00009560"/>
    <property type="gene designation" value="psa-3"/>
</dbReference>
<dbReference type="WormBase" id="F39D8.2d">
    <molecule id="Q0G825-4"/>
    <property type="protein sequence ID" value="CE50444"/>
    <property type="gene ID" value="WBGene00009560"/>
    <property type="gene designation" value="psa-3"/>
</dbReference>
<dbReference type="eggNOG" id="KOG0773">
    <property type="taxonomic scope" value="Eukaryota"/>
</dbReference>
<dbReference type="HOGENOM" id="CLU_086461_0_0_1"/>
<dbReference type="InParanoid" id="Q0G825"/>
<dbReference type="OMA" id="QCMVEME"/>
<dbReference type="OrthoDB" id="10056939at2759"/>
<dbReference type="PRO" id="PR:Q0G825"/>
<dbReference type="Proteomes" id="UP000001940">
    <property type="component" value="Chromosome X"/>
</dbReference>
<dbReference type="Bgee" id="WBGene00009560">
    <property type="expression patterns" value="Expressed in embryo and 3 other cell types or tissues"/>
</dbReference>
<dbReference type="ExpressionAtlas" id="Q0G825">
    <property type="expression patterns" value="baseline and differential"/>
</dbReference>
<dbReference type="GO" id="GO:0005634">
    <property type="term" value="C:nucleus"/>
    <property type="evidence" value="ECO:0000314"/>
    <property type="project" value="WormBase"/>
</dbReference>
<dbReference type="GO" id="GO:0001223">
    <property type="term" value="F:transcription coactivator binding"/>
    <property type="evidence" value="ECO:0000353"/>
    <property type="project" value="WormBase"/>
</dbReference>
<dbReference type="GO" id="GO:0009786">
    <property type="term" value="P:regulation of asymmetric cell division"/>
    <property type="evidence" value="ECO:0000315"/>
    <property type="project" value="WormBase"/>
</dbReference>
<dbReference type="InterPro" id="IPR032453">
    <property type="entry name" value="PKNOX/Meis_N"/>
</dbReference>
<dbReference type="Pfam" id="PF16493">
    <property type="entry name" value="Meis_PKNOX_N"/>
    <property type="match status" value="1"/>
</dbReference>
<feature type="chain" id="PRO_0000455832" description="Transcriptional coregulator psa-3">
    <location>
        <begin position="1"/>
        <end position="275"/>
    </location>
</feature>
<feature type="domain" description="MEIS N-terminal" evidence="5">
    <location>
        <begin position="91"/>
        <end position="161"/>
    </location>
</feature>
<feature type="region of interest" description="Disordered" evidence="1">
    <location>
        <begin position="239"/>
        <end position="275"/>
    </location>
</feature>
<feature type="compositionally biased region" description="Basic and acidic residues" evidence="1">
    <location>
        <begin position="248"/>
        <end position="262"/>
    </location>
</feature>
<feature type="compositionally biased region" description="Low complexity" evidence="1">
    <location>
        <begin position="263"/>
        <end position="275"/>
    </location>
</feature>
<feature type="splice variant" id="VSP_061533" description="In isoform d." evidence="4">
    <location>
        <begin position="1"/>
        <end position="118"/>
    </location>
</feature>
<feature type="splice variant" id="VSP_061534" description="In isoform c." evidence="4">
    <location>
        <begin position="1"/>
        <end position="66"/>
    </location>
</feature>
<feature type="splice variant" id="VSP_061535" description="In isoform b." evidence="4">
    <original>MTSEPSTSSEAGSSSLLDADKTNLLQEALVRAGVIRSQRQ</original>
    <variation>MSPNIK</variation>
    <location>
        <begin position="1"/>
        <end position="40"/>
    </location>
</feature>
<comment type="function">
    <text evidence="2 3">Probable transcription coregulator (PubMed:16824957). Required for asymmetric cell divisions of the T hypodermal cells, and cell fate determination, in concert with homeobox proteins nob-1 and ceh-20 (PubMed:16824957). Acts downstream of the Wnt signaling pathway, and of ceh-20 and nob-1 (PubMed:16824957).</text>
</comment>
<comment type="subunit">
    <text evidence="2">Interacts with homeobox protein ceh-20; the interaction is direct, facilitates nuclear localization of ceh-20 and may stabilize interaction of a ceh-20-nob-1 complex with DNA.</text>
</comment>
<comment type="subcellular location">
    <subcellularLocation>
        <location evidence="5">Nucleus</location>
    </subcellularLocation>
</comment>
<comment type="alternative products">
    <event type="alternative splicing"/>
    <isoform>
        <id>Q0G825-1</id>
        <name evidence="8">a</name>
        <sequence type="displayed"/>
    </isoform>
    <isoform>
        <id>Q0G825-2</id>
        <name evidence="9">b</name>
        <sequence type="described" ref="VSP_061535"/>
    </isoform>
    <isoform>
        <id>Q0G825-3</id>
        <name evidence="10">c</name>
        <sequence type="described" ref="VSP_061534"/>
    </isoform>
    <isoform>
        <id>Q0G825-4</id>
        <name evidence="11">d</name>
        <sequence type="described" ref="VSP_061533"/>
    </isoform>
</comment>
<comment type="developmental stage">
    <text evidence="2">Expressed in the T cell, head neurons, posterior gut cells, hypodermal cells (hyp7, hyp9, and hyp10), and P blast cells (PubMed:16824957). During T cell division, expressed asymmetrically, becoming up-regulated in posterior daughter cells (PubMed:16824957).</text>
</comment>
<comment type="disruption phenotype">
    <text evidence="2">RNAi-mediated knockdown results in absence of phasmid socket cells.</text>
</comment>
<evidence type="ECO:0000256" key="1">
    <source>
        <dbReference type="SAM" id="MobiDB-lite"/>
    </source>
</evidence>
<evidence type="ECO:0000269" key="2">
    <source>
    </source>
</evidence>
<evidence type="ECO:0000303" key="3">
    <source>
    </source>
</evidence>
<evidence type="ECO:0000305" key="4"/>
<evidence type="ECO:0000305" key="5">
    <source>
    </source>
</evidence>
<evidence type="ECO:0000312" key="6">
    <source>
        <dbReference type="EMBL" id="AAZ23152.1"/>
    </source>
</evidence>
<evidence type="ECO:0000312" key="7">
    <source>
        <dbReference type="Proteomes" id="UP000001940"/>
    </source>
</evidence>
<evidence type="ECO:0000312" key="8">
    <source>
        <dbReference type="WormBase" id="F39D8.2a"/>
    </source>
</evidence>
<evidence type="ECO:0000312" key="9">
    <source>
        <dbReference type="WormBase" id="F39D8.2b"/>
    </source>
</evidence>
<evidence type="ECO:0000312" key="10">
    <source>
        <dbReference type="WormBase" id="F39D8.2c"/>
    </source>
</evidence>
<evidence type="ECO:0000312" key="11">
    <source>
        <dbReference type="WormBase" id="F39D8.2d"/>
    </source>
</evidence>
<organism evidence="7">
    <name type="scientific">Caenorhabditis elegans</name>
    <dbReference type="NCBI Taxonomy" id="6239"/>
    <lineage>
        <taxon>Eukaryota</taxon>
        <taxon>Metazoa</taxon>
        <taxon>Ecdysozoa</taxon>
        <taxon>Nematoda</taxon>
        <taxon>Chromadorea</taxon>
        <taxon>Rhabditida</taxon>
        <taxon>Rhabditina</taxon>
        <taxon>Rhabditomorpha</taxon>
        <taxon>Rhabditoidea</taxon>
        <taxon>Rhabditidae</taxon>
        <taxon>Peloderinae</taxon>
        <taxon>Caenorhabditis</taxon>
    </lineage>
</organism>
<protein>
    <recommendedName>
        <fullName evidence="4">Transcriptional coregulator psa-3</fullName>
    </recommendedName>
    <alternativeName>
        <fullName evidence="8">Phasmid socket absent protein 3</fullName>
    </alternativeName>
</protein>
<accession>Q0G825</accession>
<accession>A0A0K3ASQ5</accession>
<accession>D5MNM8</accession>
<accession>G5EFB3</accession>
<proteinExistence type="evidence at protein level"/>